<proteinExistence type="evidence at protein level"/>
<protein>
    <recommendedName>
        <fullName>Bowman-Birk type proteinase inhibitor</fullName>
    </recommendedName>
</protein>
<evidence type="ECO:0000250" key="1"/>
<evidence type="ECO:0000269" key="2">
    <source>
    </source>
</evidence>
<evidence type="ECO:0000305" key="3"/>
<evidence type="ECO:0007744" key="4">
    <source>
        <dbReference type="PDB" id="1H34"/>
    </source>
</evidence>
<evidence type="ECO:0007829" key="5">
    <source>
        <dbReference type="PDB" id="1H34"/>
    </source>
</evidence>
<dbReference type="PIR" id="A01295">
    <property type="entry name" value="TILI"/>
</dbReference>
<dbReference type="PDB" id="1H34">
    <property type="method" value="X-ray"/>
    <property type="resolution" value="2.04 A"/>
    <property type="chains" value="A=1-83"/>
</dbReference>
<dbReference type="PDBsum" id="1H34"/>
<dbReference type="SMR" id="P01056"/>
<dbReference type="MEROPS" id="I12.001"/>
<dbReference type="MEROPS" id="I12.018"/>
<dbReference type="EvolutionaryTrace" id="P01056"/>
<dbReference type="GO" id="GO:0005576">
    <property type="term" value="C:extracellular region"/>
    <property type="evidence" value="ECO:0007669"/>
    <property type="project" value="InterPro"/>
</dbReference>
<dbReference type="GO" id="GO:0004867">
    <property type="term" value="F:serine-type endopeptidase inhibitor activity"/>
    <property type="evidence" value="ECO:0007669"/>
    <property type="project" value="UniProtKB-KW"/>
</dbReference>
<dbReference type="CDD" id="cd00023">
    <property type="entry name" value="BBI"/>
    <property type="match status" value="1"/>
</dbReference>
<dbReference type="FunFam" id="2.10.69.10:FF:000001">
    <property type="entry name" value="Bowman-Birk type proteinase inhibitor"/>
    <property type="match status" value="1"/>
</dbReference>
<dbReference type="Gene3D" id="2.10.69.10">
    <property type="entry name" value="Cysteine Protease (Bromelain) Inhibitor, subunit H"/>
    <property type="match status" value="1"/>
</dbReference>
<dbReference type="InterPro" id="IPR035995">
    <property type="entry name" value="Bowman-Birk_prot_inh"/>
</dbReference>
<dbReference type="InterPro" id="IPR000877">
    <property type="entry name" value="Prot_inh_BBI"/>
</dbReference>
<dbReference type="Pfam" id="PF00228">
    <property type="entry name" value="Bowman-Birk_leg"/>
    <property type="match status" value="2"/>
</dbReference>
<dbReference type="SMART" id="SM00269">
    <property type="entry name" value="BowB"/>
    <property type="match status" value="1"/>
</dbReference>
<dbReference type="SUPFAM" id="SSF57247">
    <property type="entry name" value="Bowman-Birk inhibitor, BBI"/>
    <property type="match status" value="1"/>
</dbReference>
<dbReference type="PROSITE" id="PS00281">
    <property type="entry name" value="BOWMAN_BIRK"/>
    <property type="match status" value="1"/>
</dbReference>
<feature type="chain" id="PRO_0000105850" description="Bowman-Birk type proteinase inhibitor">
    <location>
        <begin position="1"/>
        <end position="83"/>
    </location>
</feature>
<feature type="site" description="Reactive bond for trypsin" evidence="1">
    <location>
        <begin position="26"/>
        <end position="27"/>
    </location>
</feature>
<feature type="site" description="Reactive bond for chymotrypsin" evidence="1">
    <location>
        <begin position="53"/>
        <end position="54"/>
    </location>
</feature>
<feature type="disulfide bond" evidence="2 4">
    <location>
        <begin position="18"/>
        <end position="72"/>
    </location>
</feature>
<feature type="disulfide bond" evidence="2 4">
    <location>
        <begin position="19"/>
        <end position="34"/>
    </location>
</feature>
<feature type="disulfide bond" evidence="2 4">
    <location>
        <begin position="22"/>
        <end position="68"/>
    </location>
</feature>
<feature type="disulfide bond" evidence="2 4">
    <location>
        <begin position="24"/>
        <end position="32"/>
    </location>
</feature>
<feature type="disulfide bond" evidence="2 4">
    <location>
        <begin position="42"/>
        <end position="49"/>
    </location>
</feature>
<feature type="disulfide bond" evidence="2 4">
    <location>
        <begin position="46"/>
        <end position="61"/>
    </location>
</feature>
<feature type="disulfide bond" evidence="2 4">
    <location>
        <begin position="51"/>
        <end position="59"/>
    </location>
</feature>
<feature type="sequence variant">
    <original>A</original>
    <variation>L</variation>
    <location>
        <position position="23"/>
    </location>
</feature>
<feature type="sequence variant">
    <original>T</original>
    <variation>S</variation>
    <location>
        <position position="35"/>
    </location>
</feature>
<feature type="sequence variant">
    <original>L</original>
    <variation>F</variation>
    <location>
        <position position="37"/>
    </location>
</feature>
<feature type="sequence variant">
    <original>K</original>
    <variation>Z</variation>
    <location>
        <position position="47"/>
    </location>
</feature>
<feature type="sequence variant">
    <original>L</original>
    <variation>F</variation>
    <location>
        <position position="53"/>
    </location>
</feature>
<feature type="sequence variant">
    <original>B</original>
    <variation>T</variation>
    <location>
        <position position="62"/>
    </location>
</feature>
<feature type="sequence variant">
    <original>B</original>
    <variation>T</variation>
    <location>
        <position position="65"/>
    </location>
</feature>
<feature type="sequence conflict" description="In Ref. 2." evidence="3" ref="2">
    <original>A</original>
    <variation>S</variation>
    <location>
        <position position="23"/>
    </location>
</feature>
<feature type="strand" evidence="5">
    <location>
        <begin position="20"/>
        <end position="24"/>
    </location>
</feature>
<feature type="strand" evidence="5">
    <location>
        <begin position="26"/>
        <end position="29"/>
    </location>
</feature>
<feature type="strand" evidence="5">
    <location>
        <begin position="32"/>
        <end position="34"/>
    </location>
</feature>
<feature type="strand" evidence="5">
    <location>
        <begin position="37"/>
        <end position="41"/>
    </location>
</feature>
<feature type="strand" evidence="5">
    <location>
        <begin position="47"/>
        <end position="51"/>
    </location>
</feature>
<feature type="strand" evidence="5">
    <location>
        <begin position="53"/>
        <end position="56"/>
    </location>
</feature>
<feature type="strand" evidence="5">
    <location>
        <begin position="58"/>
        <end position="61"/>
    </location>
</feature>
<feature type="strand" evidence="5">
    <location>
        <begin position="65"/>
        <end position="67"/>
    </location>
</feature>
<sequence>SGHHEHSTDZPSZSSKPCCBHCACTKSIPPQCRCTDLRLDSCHSACKSCICTLSIPAQCVCBBIBDFCYEPCKSSHSDDDNNN</sequence>
<reference key="1">
    <citation type="book" date="1974" name="Proteinase inhibitors (Bayer-symp. V)">
        <title>Structure-function relationships in lima bean protease inhibitor.</title>
        <editorList>
            <person name="Fritz H."/>
            <person name="Tschesche H."/>
            <person name="Greene L.J."/>
            <person name="Truscheit E."/>
        </editorList>
        <authorList>
            <person name="Stevens F.C."/>
            <person name="Wuerz S."/>
            <person name="Krahn J."/>
        </authorList>
    </citation>
    <scope>PROTEIN SEQUENCE</scope>
</reference>
<reference key="2">
    <citation type="journal article" date="2003" name="Acta Crystallogr. D">
        <title>In-house phase determination of the lima bean trypsin inhibitor: a low-resolution sulfur-SAD case.</title>
        <authorList>
            <person name="Debreczeni J.E."/>
            <person name="Bunkoczi G."/>
            <person name="Girmann B."/>
            <person name="Sheldrick G.M."/>
        </authorList>
    </citation>
    <scope>X-RAY CRYSTALLOGRAPHY (2.04 ANGSTROMS)</scope>
    <scope>DISULFIDE BONDS</scope>
</reference>
<name>IBB_PHALU</name>
<accession>P01056</accession>
<organism>
    <name type="scientific">Phaseolus lunatus</name>
    <name type="common">Lima bean</name>
    <name type="synonym">Phaseolus limensis</name>
    <dbReference type="NCBI Taxonomy" id="3884"/>
    <lineage>
        <taxon>Eukaryota</taxon>
        <taxon>Viridiplantae</taxon>
        <taxon>Streptophyta</taxon>
        <taxon>Embryophyta</taxon>
        <taxon>Tracheophyta</taxon>
        <taxon>Spermatophyta</taxon>
        <taxon>Magnoliopsida</taxon>
        <taxon>eudicotyledons</taxon>
        <taxon>Gunneridae</taxon>
        <taxon>Pentapetalae</taxon>
        <taxon>rosids</taxon>
        <taxon>fabids</taxon>
        <taxon>Fabales</taxon>
        <taxon>Fabaceae</taxon>
        <taxon>Papilionoideae</taxon>
        <taxon>50 kb inversion clade</taxon>
        <taxon>NPAAA clade</taxon>
        <taxon>indigoferoid/millettioid clade</taxon>
        <taxon>Phaseoleae</taxon>
        <taxon>Phaseolus</taxon>
    </lineage>
</organism>
<comment type="miscellaneous">
    <text>Several variants were isolated from a commercial Lima bean preparation. Some lacked 8, 12, or 14 N-terminal residues and 2 C-terminal residues.</text>
</comment>
<comment type="similarity">
    <text evidence="3">Belongs to the Bowman-Birk serine protease inhibitor family.</text>
</comment>
<keyword id="KW-0002">3D-structure</keyword>
<keyword id="KW-0903">Direct protein sequencing</keyword>
<keyword id="KW-1015">Disulfide bond</keyword>
<keyword id="KW-0646">Protease inhibitor</keyword>
<keyword id="KW-0722">Serine protease inhibitor</keyword>